<accession>Q2UQG9</accession>
<gene>
    <name evidence="1" type="primary">mdm12</name>
    <name type="ORF">AO090005001253</name>
</gene>
<reference key="1">
    <citation type="journal article" date="2005" name="Nature">
        <title>Genome sequencing and analysis of Aspergillus oryzae.</title>
        <authorList>
            <person name="Machida M."/>
            <person name="Asai K."/>
            <person name="Sano M."/>
            <person name="Tanaka T."/>
            <person name="Kumagai T."/>
            <person name="Terai G."/>
            <person name="Kusumoto K."/>
            <person name="Arima T."/>
            <person name="Akita O."/>
            <person name="Kashiwagi Y."/>
            <person name="Abe K."/>
            <person name="Gomi K."/>
            <person name="Horiuchi H."/>
            <person name="Kitamoto K."/>
            <person name="Kobayashi T."/>
            <person name="Takeuchi M."/>
            <person name="Denning D.W."/>
            <person name="Galagan J.E."/>
            <person name="Nierman W.C."/>
            <person name="Yu J."/>
            <person name="Archer D.B."/>
            <person name="Bennett J.W."/>
            <person name="Bhatnagar D."/>
            <person name="Cleveland T.E."/>
            <person name="Fedorova N.D."/>
            <person name="Gotoh O."/>
            <person name="Horikawa H."/>
            <person name="Hosoyama A."/>
            <person name="Ichinomiya M."/>
            <person name="Igarashi R."/>
            <person name="Iwashita K."/>
            <person name="Juvvadi P.R."/>
            <person name="Kato M."/>
            <person name="Kato Y."/>
            <person name="Kin T."/>
            <person name="Kokubun A."/>
            <person name="Maeda H."/>
            <person name="Maeyama N."/>
            <person name="Maruyama J."/>
            <person name="Nagasaki H."/>
            <person name="Nakajima T."/>
            <person name="Oda K."/>
            <person name="Okada K."/>
            <person name="Paulsen I."/>
            <person name="Sakamoto K."/>
            <person name="Sawano T."/>
            <person name="Takahashi M."/>
            <person name="Takase K."/>
            <person name="Terabayashi Y."/>
            <person name="Wortman J.R."/>
            <person name="Yamada O."/>
            <person name="Yamagata Y."/>
            <person name="Anazawa H."/>
            <person name="Hata Y."/>
            <person name="Koide Y."/>
            <person name="Komori T."/>
            <person name="Koyama Y."/>
            <person name="Minetoki T."/>
            <person name="Suharnan S."/>
            <person name="Tanaka A."/>
            <person name="Isono K."/>
            <person name="Kuhara S."/>
            <person name="Ogasawara N."/>
            <person name="Kikuchi H."/>
        </authorList>
    </citation>
    <scope>NUCLEOTIDE SEQUENCE [LARGE SCALE GENOMIC DNA]</scope>
    <source>
        <strain>ATCC 42149 / RIB 40</strain>
    </source>
</reference>
<sequence>MSIEVDWRAATSGPDGEALAERIRSFIHDKFQQVALPRFIRSVQVHSFDFGTIPPDLEVKDICEPFADFYEEDEDDETSDVSEELVSGHGTQWHRDLNEPPFHEEMAMNRPLRDPFDEAFHSSTLRSPMEHLNPHFLPRAGTPGIPGGTSTLGYHLMSLGGLSGTQTPLAAVAGGTPFANGWTDPGMGASSRGHPSISGPTAVHPSRMEADIDTSNPTSRPSTSSTLPSHPSASNQPSGDATTGKEHGSLAEDEHLDDPMTSGHPLRLPPRMRERRPEDFQVLCHAKYAGDVRLSLTAEILLDYPMPSFVGLPLKLNVTGITFDGVAVIAYIRKRVHFCFLSAEDADALIGSDQQEARGQDDRPWSSADPTASPKRQGGLLREIRVESEIGRKEDGKQVLKNVGKVERFVLAQVRRTFEEEMVFPSFWTFLI</sequence>
<evidence type="ECO:0000255" key="1">
    <source>
        <dbReference type="HAMAP-Rule" id="MF_03104"/>
    </source>
</evidence>
<evidence type="ECO:0000256" key="2">
    <source>
        <dbReference type="SAM" id="MobiDB-lite"/>
    </source>
</evidence>
<evidence type="ECO:0000305" key="3"/>
<dbReference type="EMBL" id="BA000049">
    <property type="protein sequence ID" value="BAE56196.1"/>
    <property type="status" value="ALT_SEQ"/>
    <property type="molecule type" value="Genomic_DNA"/>
</dbReference>
<dbReference type="RefSeq" id="XP_001818198.2">
    <property type="nucleotide sequence ID" value="XM_001818146.2"/>
</dbReference>
<dbReference type="SMR" id="Q2UQG9"/>
<dbReference type="STRING" id="510516.Q2UQG9"/>
<dbReference type="Proteomes" id="UP000006564">
    <property type="component" value="Chromosome 1"/>
</dbReference>
<dbReference type="GO" id="GO:0005789">
    <property type="term" value="C:endoplasmic reticulum membrane"/>
    <property type="evidence" value="ECO:0007669"/>
    <property type="project" value="UniProtKB-SubCell"/>
</dbReference>
<dbReference type="GO" id="GO:0032865">
    <property type="term" value="C:ERMES complex"/>
    <property type="evidence" value="ECO:0007669"/>
    <property type="project" value="UniProtKB-UniRule"/>
</dbReference>
<dbReference type="GO" id="GO:0008289">
    <property type="term" value="F:lipid binding"/>
    <property type="evidence" value="ECO:0007669"/>
    <property type="project" value="UniProtKB-KW"/>
</dbReference>
<dbReference type="GO" id="GO:0000002">
    <property type="term" value="P:mitochondrial genome maintenance"/>
    <property type="evidence" value="ECO:0007669"/>
    <property type="project" value="UniProtKB-UniRule"/>
</dbReference>
<dbReference type="GO" id="GO:1990456">
    <property type="term" value="P:mitochondrion-endoplasmic reticulum membrane tethering"/>
    <property type="evidence" value="ECO:0007669"/>
    <property type="project" value="TreeGrafter"/>
</dbReference>
<dbReference type="GO" id="GO:0015914">
    <property type="term" value="P:phospholipid transport"/>
    <property type="evidence" value="ECO:0007669"/>
    <property type="project" value="TreeGrafter"/>
</dbReference>
<dbReference type="GO" id="GO:0045040">
    <property type="term" value="P:protein insertion into mitochondrial outer membrane"/>
    <property type="evidence" value="ECO:0007669"/>
    <property type="project" value="UniProtKB-UniRule"/>
</dbReference>
<dbReference type="CDD" id="cd21672">
    <property type="entry name" value="SMP_Mdm12"/>
    <property type="match status" value="1"/>
</dbReference>
<dbReference type="HAMAP" id="MF_03104">
    <property type="entry name" value="Mdm12"/>
    <property type="match status" value="1"/>
</dbReference>
<dbReference type="InterPro" id="IPR027532">
    <property type="entry name" value="Mdm12"/>
</dbReference>
<dbReference type="InterPro" id="IPR019411">
    <property type="entry name" value="MMM1_dom"/>
</dbReference>
<dbReference type="InterPro" id="IPR031468">
    <property type="entry name" value="SMP_LBD"/>
</dbReference>
<dbReference type="PANTHER" id="PTHR28204">
    <property type="entry name" value="MITOCHONDRIAL DISTRIBUTION AND MORPHOLOGY PROTEIN 12"/>
    <property type="match status" value="1"/>
</dbReference>
<dbReference type="PANTHER" id="PTHR28204:SF1">
    <property type="entry name" value="MITOCHONDRIAL DISTRIBUTION AND MORPHOLOGY PROTEIN 12"/>
    <property type="match status" value="1"/>
</dbReference>
<dbReference type="Pfam" id="PF10296">
    <property type="entry name" value="MMM1"/>
    <property type="match status" value="1"/>
</dbReference>
<dbReference type="PROSITE" id="PS51847">
    <property type="entry name" value="SMP"/>
    <property type="match status" value="1"/>
</dbReference>
<comment type="function">
    <text evidence="1">Component of the ERMES/MDM complex, which serves as a molecular tether to connect the endoplasmic reticulum (ER) and mitochondria. Components of this complex are involved in the control of mitochondrial shape and protein biogenesis, and function in nonvesicular lipid trafficking between the ER and mitochondria. Mdm12 is required for the interaction of the ER-resident membrane protein mmm1 and the outer mitochondrial membrane-resident beta-barrel protein mdm10. The mdm12-mmm1 subcomplex functions in the major beta-barrel assembly pathway that is responsible for biogenesis of all mitochondrial outer membrane beta-barrel proteins, and acts in a late step after the SAM complex. The mdm10-mdm12-mmm1 subcomplex further acts in the TOM40-specific pathway after the action of the mdm12-mmm1 complex. Essential for establishing and maintaining the structure of mitochondria and maintenance of mtDNA nucleoids.</text>
</comment>
<comment type="subunit">
    <text evidence="1">Component of the ER-mitochondria encounter structure (ERMES) or MDM complex, composed of mmm1, mdm10, mdm12 and mdm34. A mmm1 homodimer associates with one molecule of mdm12 on each side in a pairwise head-to-tail manner, and the SMP-LTD domains of mmm1 and mdm12 generate a continuous hydrophobic tunnel for phospholipid trafficking.</text>
</comment>
<comment type="subcellular location">
    <subcellularLocation>
        <location evidence="1">Mitochondrion outer membrane</location>
        <topology evidence="1">Peripheral membrane protein</topology>
        <orientation evidence="1">Cytoplasmic side</orientation>
    </subcellularLocation>
    <subcellularLocation>
        <location evidence="1">Endoplasmic reticulum membrane</location>
        <topology evidence="1">Peripheral membrane protein</topology>
        <orientation evidence="1">Cytoplasmic side</orientation>
    </subcellularLocation>
    <text evidence="1">The ERMES/MDM complex localizes to a few discrete foci (around 10 per single cell), that represent mitochondria-endoplasmic reticulum junctions. These foci are often found next to mtDNA nucleoids.</text>
</comment>
<comment type="domain">
    <text evidence="1">The SMP-LTD domain is a barrel-like domain that can bind various types of glycerophospholipids in its interior and mediate their transfer between two adjacent bilayers.</text>
</comment>
<comment type="similarity">
    <text evidence="1">Belongs to the MDM12 family.</text>
</comment>
<comment type="sequence caution" evidence="3">
    <conflict type="erroneous gene model prediction">
        <sequence resource="EMBL-CDS" id="BAE56196"/>
    </conflict>
</comment>
<proteinExistence type="inferred from homology"/>
<protein>
    <recommendedName>
        <fullName evidence="1">Mitochondrial distribution and morphology protein 12</fullName>
    </recommendedName>
    <alternativeName>
        <fullName evidence="1">Mitochondrial inheritance component MDM12</fullName>
    </alternativeName>
</protein>
<name>MDM12_ASPOR</name>
<keyword id="KW-0256">Endoplasmic reticulum</keyword>
<keyword id="KW-0445">Lipid transport</keyword>
<keyword id="KW-0446">Lipid-binding</keyword>
<keyword id="KW-0472">Membrane</keyword>
<keyword id="KW-0496">Mitochondrion</keyword>
<keyword id="KW-1000">Mitochondrion outer membrane</keyword>
<keyword id="KW-1185">Reference proteome</keyword>
<keyword id="KW-0813">Transport</keyword>
<organism>
    <name type="scientific">Aspergillus oryzae (strain ATCC 42149 / RIB 40)</name>
    <name type="common">Yellow koji mold</name>
    <dbReference type="NCBI Taxonomy" id="510516"/>
    <lineage>
        <taxon>Eukaryota</taxon>
        <taxon>Fungi</taxon>
        <taxon>Dikarya</taxon>
        <taxon>Ascomycota</taxon>
        <taxon>Pezizomycotina</taxon>
        <taxon>Eurotiomycetes</taxon>
        <taxon>Eurotiomycetidae</taxon>
        <taxon>Eurotiales</taxon>
        <taxon>Aspergillaceae</taxon>
        <taxon>Aspergillus</taxon>
        <taxon>Aspergillus subgen. Circumdati</taxon>
    </lineage>
</organism>
<feature type="chain" id="PRO_0000384273" description="Mitochondrial distribution and morphology protein 12">
    <location>
        <begin position="1"/>
        <end position="432"/>
    </location>
</feature>
<feature type="domain" description="SMP-LTD" evidence="1">
    <location>
        <begin position="1"/>
        <end position="432"/>
    </location>
</feature>
<feature type="region of interest" description="Disordered" evidence="2">
    <location>
        <begin position="182"/>
        <end position="273"/>
    </location>
</feature>
<feature type="region of interest" description="Disordered" evidence="2">
    <location>
        <begin position="354"/>
        <end position="377"/>
    </location>
</feature>
<feature type="compositionally biased region" description="Low complexity" evidence="2">
    <location>
        <begin position="214"/>
        <end position="234"/>
    </location>
</feature>
<feature type="compositionally biased region" description="Basic and acidic residues" evidence="2">
    <location>
        <begin position="243"/>
        <end position="253"/>
    </location>
</feature>
<feature type="compositionally biased region" description="Basic and acidic residues" evidence="2">
    <location>
        <begin position="355"/>
        <end position="364"/>
    </location>
</feature>